<keyword id="KW-0413">Isomerase</keyword>
<name>RPIA_STAAR</name>
<organism>
    <name type="scientific">Staphylococcus aureus (strain MRSA252)</name>
    <dbReference type="NCBI Taxonomy" id="282458"/>
    <lineage>
        <taxon>Bacteria</taxon>
        <taxon>Bacillati</taxon>
        <taxon>Bacillota</taxon>
        <taxon>Bacilli</taxon>
        <taxon>Bacillales</taxon>
        <taxon>Staphylococcaceae</taxon>
        <taxon>Staphylococcus</taxon>
    </lineage>
</organism>
<protein>
    <recommendedName>
        <fullName evidence="1">Ribose-5-phosphate isomerase A</fullName>
        <ecNumber evidence="1">5.3.1.6</ecNumber>
    </recommendedName>
    <alternativeName>
        <fullName evidence="1">Phosphoriboisomerase A</fullName>
        <shortName evidence="1">PRI</shortName>
    </alternativeName>
</protein>
<evidence type="ECO:0000255" key="1">
    <source>
        <dbReference type="HAMAP-Rule" id="MF_00170"/>
    </source>
</evidence>
<feature type="chain" id="PRO_0000158466" description="Ribose-5-phosphate isomerase A">
    <location>
        <begin position="1"/>
        <end position="228"/>
    </location>
</feature>
<feature type="active site" description="Proton acceptor" evidence="1">
    <location>
        <position position="107"/>
    </location>
</feature>
<feature type="binding site" evidence="1">
    <location>
        <begin position="29"/>
        <end position="32"/>
    </location>
    <ligand>
        <name>substrate</name>
    </ligand>
</feature>
<feature type="binding site" evidence="1">
    <location>
        <begin position="85"/>
        <end position="88"/>
    </location>
    <ligand>
        <name>substrate</name>
    </ligand>
</feature>
<feature type="binding site" evidence="1">
    <location>
        <begin position="98"/>
        <end position="101"/>
    </location>
    <ligand>
        <name>substrate</name>
    </ligand>
</feature>
<feature type="binding site" evidence="1">
    <location>
        <position position="125"/>
    </location>
    <ligand>
        <name>substrate</name>
    </ligand>
</feature>
<comment type="function">
    <text evidence="1">Catalyzes the reversible conversion of ribose-5-phosphate to ribulose 5-phosphate.</text>
</comment>
<comment type="catalytic activity">
    <reaction evidence="1">
        <text>aldehydo-D-ribose 5-phosphate = D-ribulose 5-phosphate</text>
        <dbReference type="Rhea" id="RHEA:14657"/>
        <dbReference type="ChEBI" id="CHEBI:58121"/>
        <dbReference type="ChEBI" id="CHEBI:58273"/>
        <dbReference type="EC" id="5.3.1.6"/>
    </reaction>
</comment>
<comment type="pathway">
    <text evidence="1">Carbohydrate degradation; pentose phosphate pathway; D-ribose 5-phosphate from D-ribulose 5-phosphate (non-oxidative stage): step 1/1.</text>
</comment>
<comment type="subunit">
    <text evidence="1">Homodimer.</text>
</comment>
<comment type="similarity">
    <text evidence="1">Belongs to the ribose 5-phosphate isomerase family.</text>
</comment>
<gene>
    <name evidence="1" type="primary">rpiA</name>
    <name type="ordered locus">SAR2422</name>
</gene>
<reference key="1">
    <citation type="journal article" date="2004" name="Proc. Natl. Acad. Sci. U.S.A.">
        <title>Complete genomes of two clinical Staphylococcus aureus strains: evidence for the rapid evolution of virulence and drug resistance.</title>
        <authorList>
            <person name="Holden M.T.G."/>
            <person name="Feil E.J."/>
            <person name="Lindsay J.A."/>
            <person name="Peacock S.J."/>
            <person name="Day N.P.J."/>
            <person name="Enright M.C."/>
            <person name="Foster T.J."/>
            <person name="Moore C.E."/>
            <person name="Hurst L."/>
            <person name="Atkin R."/>
            <person name="Barron A."/>
            <person name="Bason N."/>
            <person name="Bentley S.D."/>
            <person name="Chillingworth C."/>
            <person name="Chillingworth T."/>
            <person name="Churcher C."/>
            <person name="Clark L."/>
            <person name="Corton C."/>
            <person name="Cronin A."/>
            <person name="Doggett J."/>
            <person name="Dowd L."/>
            <person name="Feltwell T."/>
            <person name="Hance Z."/>
            <person name="Harris B."/>
            <person name="Hauser H."/>
            <person name="Holroyd S."/>
            <person name="Jagels K."/>
            <person name="James K.D."/>
            <person name="Lennard N."/>
            <person name="Line A."/>
            <person name="Mayes R."/>
            <person name="Moule S."/>
            <person name="Mungall K."/>
            <person name="Ormond D."/>
            <person name="Quail M.A."/>
            <person name="Rabbinowitsch E."/>
            <person name="Rutherford K.M."/>
            <person name="Sanders M."/>
            <person name="Sharp S."/>
            <person name="Simmonds M."/>
            <person name="Stevens K."/>
            <person name="Whitehead S."/>
            <person name="Barrell B.G."/>
            <person name="Spratt B.G."/>
            <person name="Parkhill J."/>
        </authorList>
    </citation>
    <scope>NUCLEOTIDE SEQUENCE [LARGE SCALE GENOMIC DNA]</scope>
    <source>
        <strain>MRSA252</strain>
    </source>
</reference>
<dbReference type="EC" id="5.3.1.6" evidence="1"/>
<dbReference type="EMBL" id="BX571856">
    <property type="protein sequence ID" value="CAG41402.1"/>
    <property type="molecule type" value="Genomic_DNA"/>
</dbReference>
<dbReference type="RefSeq" id="WP_000655867.1">
    <property type="nucleotide sequence ID" value="NC_002952.2"/>
</dbReference>
<dbReference type="SMR" id="Q6GE99"/>
<dbReference type="KEGG" id="sar:SAR2422"/>
<dbReference type="HOGENOM" id="CLU_056590_1_0_9"/>
<dbReference type="UniPathway" id="UPA00115">
    <property type="reaction ID" value="UER00412"/>
</dbReference>
<dbReference type="Proteomes" id="UP000000596">
    <property type="component" value="Chromosome"/>
</dbReference>
<dbReference type="GO" id="GO:0005829">
    <property type="term" value="C:cytosol"/>
    <property type="evidence" value="ECO:0007669"/>
    <property type="project" value="TreeGrafter"/>
</dbReference>
<dbReference type="GO" id="GO:0004751">
    <property type="term" value="F:ribose-5-phosphate isomerase activity"/>
    <property type="evidence" value="ECO:0007669"/>
    <property type="project" value="UniProtKB-UniRule"/>
</dbReference>
<dbReference type="GO" id="GO:0006014">
    <property type="term" value="P:D-ribose metabolic process"/>
    <property type="evidence" value="ECO:0007669"/>
    <property type="project" value="TreeGrafter"/>
</dbReference>
<dbReference type="GO" id="GO:0009052">
    <property type="term" value="P:pentose-phosphate shunt, non-oxidative branch"/>
    <property type="evidence" value="ECO:0007669"/>
    <property type="project" value="UniProtKB-UniRule"/>
</dbReference>
<dbReference type="CDD" id="cd01398">
    <property type="entry name" value="RPI_A"/>
    <property type="match status" value="1"/>
</dbReference>
<dbReference type="FunFam" id="3.40.50.1360:FF:000001">
    <property type="entry name" value="Ribose-5-phosphate isomerase A"/>
    <property type="match status" value="1"/>
</dbReference>
<dbReference type="Gene3D" id="3.30.70.260">
    <property type="match status" value="1"/>
</dbReference>
<dbReference type="Gene3D" id="3.40.50.1360">
    <property type="match status" value="1"/>
</dbReference>
<dbReference type="HAMAP" id="MF_00170">
    <property type="entry name" value="Rib_5P_isom_A"/>
    <property type="match status" value="1"/>
</dbReference>
<dbReference type="InterPro" id="IPR037171">
    <property type="entry name" value="NagB/RpiA_transferase-like"/>
</dbReference>
<dbReference type="InterPro" id="IPR020672">
    <property type="entry name" value="Ribose5P_isomerase_typA_subgr"/>
</dbReference>
<dbReference type="InterPro" id="IPR004788">
    <property type="entry name" value="Ribose5P_isomerase_type_A"/>
</dbReference>
<dbReference type="NCBIfam" id="NF001924">
    <property type="entry name" value="PRK00702.1"/>
    <property type="match status" value="1"/>
</dbReference>
<dbReference type="NCBIfam" id="NF010585">
    <property type="entry name" value="PRK13978.1"/>
    <property type="match status" value="1"/>
</dbReference>
<dbReference type="NCBIfam" id="TIGR00021">
    <property type="entry name" value="rpiA"/>
    <property type="match status" value="1"/>
</dbReference>
<dbReference type="PANTHER" id="PTHR11934">
    <property type="entry name" value="RIBOSE-5-PHOSPHATE ISOMERASE"/>
    <property type="match status" value="1"/>
</dbReference>
<dbReference type="PANTHER" id="PTHR11934:SF0">
    <property type="entry name" value="RIBOSE-5-PHOSPHATE ISOMERASE"/>
    <property type="match status" value="1"/>
</dbReference>
<dbReference type="Pfam" id="PF06026">
    <property type="entry name" value="Rib_5-P_isom_A"/>
    <property type="match status" value="1"/>
</dbReference>
<dbReference type="SUPFAM" id="SSF75445">
    <property type="entry name" value="D-ribose-5-phosphate isomerase (RpiA), lid domain"/>
    <property type="match status" value="1"/>
</dbReference>
<dbReference type="SUPFAM" id="SSF100950">
    <property type="entry name" value="NagB/RpiA/CoA transferase-like"/>
    <property type="match status" value="1"/>
</dbReference>
<proteinExistence type="inferred from homology"/>
<sequence>MKDVKALKLMTLNDVLSQINGDMTLGIGTGSTMELLLPQMAQLIKERGYNITGVCTSNKIAFLAKELGIKICEINDVDHIDLAIDGADEVDPSLNIIKGGGGALFREKVIDEMASRFVVVVDETKMVQYLGETFKLPVEVDKFNWYHILRKIESYADIKVERRVNEDVAFITDNGNYILDCKLPKGIDPYKFHEYLIHLTGVFETGYFLDMADQVIVGTQEGVKILEK</sequence>
<accession>Q6GE99</accession>